<evidence type="ECO:0000250" key="1"/>
<evidence type="ECO:0000305" key="2"/>
<accession>Q5HRH7</accession>
<name>HPS_STAEQ</name>
<reference key="1">
    <citation type="journal article" date="2005" name="J. Bacteriol.">
        <title>Insights on evolution of virulence and resistance from the complete genome analysis of an early methicillin-resistant Staphylococcus aureus strain and a biofilm-producing methicillin-resistant Staphylococcus epidermidis strain.</title>
        <authorList>
            <person name="Gill S.R."/>
            <person name="Fouts D.E."/>
            <person name="Archer G.L."/>
            <person name="Mongodin E.F."/>
            <person name="DeBoy R.T."/>
            <person name="Ravel J."/>
            <person name="Paulsen I.T."/>
            <person name="Kolonay J.F."/>
            <person name="Brinkac L.M."/>
            <person name="Beanan M.J."/>
            <person name="Dodson R.J."/>
            <person name="Daugherty S.C."/>
            <person name="Madupu R."/>
            <person name="Angiuoli S.V."/>
            <person name="Durkin A.S."/>
            <person name="Haft D.H."/>
            <person name="Vamathevan J.J."/>
            <person name="Khouri H."/>
            <person name="Utterback T.R."/>
            <person name="Lee C."/>
            <person name="Dimitrov G."/>
            <person name="Jiang L."/>
            <person name="Qin H."/>
            <person name="Weidman J."/>
            <person name="Tran K."/>
            <person name="Kang K.H."/>
            <person name="Hance I.R."/>
            <person name="Nelson K.E."/>
            <person name="Fraser C.M."/>
        </authorList>
    </citation>
    <scope>NUCLEOTIDE SEQUENCE [LARGE SCALE GENOMIC DNA]</scope>
    <source>
        <strain>ATCC 35984 / DSM 28319 / BCRC 17069 / CCUG 31568 / BM 3577 / RP62A</strain>
    </source>
</reference>
<keyword id="KW-0119">Carbohydrate metabolism</keyword>
<keyword id="KW-0456">Lyase</keyword>
<keyword id="KW-0554">One-carbon metabolism</keyword>
<keyword id="KW-1185">Reference proteome</keyword>
<protein>
    <recommendedName>
        <fullName>3-hexulose-6-phosphate synthase</fullName>
        <shortName>HPS</shortName>
        <ecNumber>4.1.2.43</ecNumber>
    </recommendedName>
    <alternativeName>
        <fullName>D-arabino-3-hexulose-6-phosphate formaldehyde lyase</fullName>
    </alternativeName>
</protein>
<feature type="chain" id="PRO_0000269524" description="3-hexulose-6-phosphate synthase">
    <location>
        <begin position="1"/>
        <end position="210"/>
    </location>
</feature>
<dbReference type="EC" id="4.1.2.43"/>
<dbReference type="EMBL" id="CP000029">
    <property type="protein sequence ID" value="AAW53588.1"/>
    <property type="molecule type" value="Genomic_DNA"/>
</dbReference>
<dbReference type="SMR" id="Q5HRH7"/>
<dbReference type="STRING" id="176279.SERP0216"/>
<dbReference type="KEGG" id="ser:SERP0216"/>
<dbReference type="eggNOG" id="COG0269">
    <property type="taxonomic scope" value="Bacteria"/>
</dbReference>
<dbReference type="HOGENOM" id="CLU_081825_1_0_9"/>
<dbReference type="UniPathway" id="UPA00294">
    <property type="reaction ID" value="UER00434"/>
</dbReference>
<dbReference type="Proteomes" id="UP000000531">
    <property type="component" value="Chromosome"/>
</dbReference>
<dbReference type="GO" id="GO:0033982">
    <property type="term" value="F:3-dehydro-L-gulonate-6-phosphate decarboxylase activity"/>
    <property type="evidence" value="ECO:0007669"/>
    <property type="project" value="TreeGrafter"/>
</dbReference>
<dbReference type="GO" id="GO:0043801">
    <property type="term" value="F:hexulose-6-phosphate synthase activity"/>
    <property type="evidence" value="ECO:0007669"/>
    <property type="project" value="UniProtKB-EC"/>
</dbReference>
<dbReference type="GO" id="GO:0004590">
    <property type="term" value="F:orotidine-5'-phosphate decarboxylase activity"/>
    <property type="evidence" value="ECO:0007669"/>
    <property type="project" value="InterPro"/>
</dbReference>
<dbReference type="GO" id="GO:0006207">
    <property type="term" value="P:'de novo' pyrimidine nucleobase biosynthetic process"/>
    <property type="evidence" value="ECO:0007669"/>
    <property type="project" value="InterPro"/>
</dbReference>
<dbReference type="GO" id="GO:0019647">
    <property type="term" value="P:formaldehyde assimilation via ribulose monophosphate cycle"/>
    <property type="evidence" value="ECO:0007669"/>
    <property type="project" value="UniProtKB-UniPathway"/>
</dbReference>
<dbReference type="GO" id="GO:0019854">
    <property type="term" value="P:L-ascorbic acid catabolic process"/>
    <property type="evidence" value="ECO:0007669"/>
    <property type="project" value="TreeGrafter"/>
</dbReference>
<dbReference type="GO" id="GO:0006730">
    <property type="term" value="P:one-carbon metabolic process"/>
    <property type="evidence" value="ECO:0007669"/>
    <property type="project" value="UniProtKB-KW"/>
</dbReference>
<dbReference type="CDD" id="cd04726">
    <property type="entry name" value="KGPDC_HPS"/>
    <property type="match status" value="1"/>
</dbReference>
<dbReference type="FunFam" id="3.20.20.70:FF:000022">
    <property type="entry name" value="3-keto-L-gulonate-6-phosphate decarboxylase UlaD"/>
    <property type="match status" value="1"/>
</dbReference>
<dbReference type="Gene3D" id="3.20.20.70">
    <property type="entry name" value="Aldolase class I"/>
    <property type="match status" value="1"/>
</dbReference>
<dbReference type="InterPro" id="IPR017553">
    <property type="entry name" value="3-hexulose-6-phosphate_synth"/>
</dbReference>
<dbReference type="InterPro" id="IPR013785">
    <property type="entry name" value="Aldolase_TIM"/>
</dbReference>
<dbReference type="InterPro" id="IPR041710">
    <property type="entry name" value="HPS/KGPDC"/>
</dbReference>
<dbReference type="InterPro" id="IPR001754">
    <property type="entry name" value="OMPdeCOase_dom"/>
</dbReference>
<dbReference type="InterPro" id="IPR011060">
    <property type="entry name" value="RibuloseP-bd_barrel"/>
</dbReference>
<dbReference type="NCBIfam" id="TIGR03128">
    <property type="entry name" value="RuMP_HxlA"/>
    <property type="match status" value="1"/>
</dbReference>
<dbReference type="PANTHER" id="PTHR35039">
    <property type="entry name" value="3-KETO-L-GULONATE-6-PHOSPHATE DECARBOXYLASE SGBH-RELATED"/>
    <property type="match status" value="1"/>
</dbReference>
<dbReference type="PANTHER" id="PTHR35039:SF3">
    <property type="entry name" value="3-KETO-L-GULONATE-6-PHOSPHATE DECARBOXYLASE SGBH-RELATED"/>
    <property type="match status" value="1"/>
</dbReference>
<dbReference type="Pfam" id="PF00215">
    <property type="entry name" value="OMPdecase"/>
    <property type="match status" value="1"/>
</dbReference>
<dbReference type="SMART" id="SM00934">
    <property type="entry name" value="OMPdecase"/>
    <property type="match status" value="1"/>
</dbReference>
<dbReference type="SUPFAM" id="SSF51366">
    <property type="entry name" value="Ribulose-phoshate binding barrel"/>
    <property type="match status" value="1"/>
</dbReference>
<gene>
    <name type="ordered locus">SERP0216</name>
</gene>
<proteinExistence type="inferred from homology"/>
<comment type="function">
    <text evidence="1">Catalyzes the condensation of ribulose 5-phosphate with formaldehyde to form 3-hexulose 6-phosphate.</text>
</comment>
<comment type="catalytic activity">
    <reaction>
        <text>D-ribulose 5-phosphate + formaldehyde = D-arabino-hex-3-ulose 6-phosphate</text>
        <dbReference type="Rhea" id="RHEA:25201"/>
        <dbReference type="ChEBI" id="CHEBI:16842"/>
        <dbReference type="ChEBI" id="CHEBI:58121"/>
        <dbReference type="ChEBI" id="CHEBI:58542"/>
        <dbReference type="EC" id="4.1.2.43"/>
    </reaction>
</comment>
<comment type="pathway">
    <text>One-carbon metabolism; formaldehyde assimilation via RuMP pathway; D-fructose 6-phosphate from D-ribulose 5-phosphate and formaldehyde: step 1/2.</text>
</comment>
<comment type="similarity">
    <text evidence="2">Belongs to the HPS/KGPDC family. HPS subfamily.</text>
</comment>
<sequence>MELQLAIDLLNKEEAAKLAQKVEEYVDIVEIGTPIVINEGLPAVQHLNENINNAKVLADLKIMDAADYEVSQAVKYGADIVTILGVAEDASIKAAVEEAHKHGKALLVDMIAVQNLEQRAKELDEMGADYIAVHTGYDLQAEGKSPLDSLRTVKSVIKNSKVAVAGGIKPDTIKDIVAEDPDLVIVGGGIANADDPVEAAKQCRAAIEGK</sequence>
<organism>
    <name type="scientific">Staphylococcus epidermidis (strain ATCC 35984 / DSM 28319 / BCRC 17069 / CCUG 31568 / BM 3577 / RP62A)</name>
    <dbReference type="NCBI Taxonomy" id="176279"/>
    <lineage>
        <taxon>Bacteria</taxon>
        <taxon>Bacillati</taxon>
        <taxon>Bacillota</taxon>
        <taxon>Bacilli</taxon>
        <taxon>Bacillales</taxon>
        <taxon>Staphylococcaceae</taxon>
        <taxon>Staphylococcus</taxon>
    </lineage>
</organism>